<sequence length="438" mass="48494">MKPLRYTASALALGLALMANAQAVTTIPFWHSMEGELGKEVDSLAQRFNAENPDYKIVPTYKGNYEQNLSAGIAAFRTGNAPAILQVYEVGTATMMASKAIKPVYDVFKEAGIQFDESQFVPTVSGYYSDSKTGHLLSQPFNSSTPVLYYNKDAFKKAGLDPEQPPKTWQDLADYAAKLKASGMKCGYASGWQGWIQLENFSAWNGLPFASKNNGFDGTDAVLEFNKPEQVKHIAMLEEMNKKGDFSYVGRKDESTEKFYNGDCAMTTASSGSLANIREYAKFNYGVGMMPYDADAKDAPQNAIIGGASLWVMQGKDKETYTGVAKFLDFLAKPENAAEWHQKTGYLPITKAAYDLTREQGFYEKNPGADIATRQMLNKPPLPFTKGLRLGNMPQIRVIVDEELESVWTGKKTPQQALDTAVERGNQLLRRFEKSTKS</sequence>
<organism>
    <name type="scientific">Escherichia coli O6:K15:H31 (strain 536 / UPEC)</name>
    <dbReference type="NCBI Taxonomy" id="362663"/>
    <lineage>
        <taxon>Bacteria</taxon>
        <taxon>Pseudomonadati</taxon>
        <taxon>Pseudomonadota</taxon>
        <taxon>Gammaproteobacteria</taxon>
        <taxon>Enterobacterales</taxon>
        <taxon>Enterobacteriaceae</taxon>
        <taxon>Escherichia</taxon>
    </lineage>
</organism>
<evidence type="ECO:0000250" key="1">
    <source>
        <dbReference type="UniProtKB" id="P0AG80"/>
    </source>
</evidence>
<evidence type="ECO:0000255" key="2"/>
<evidence type="ECO:0000305" key="3"/>
<reference key="1">
    <citation type="journal article" date="2006" name="Mol. Microbiol.">
        <title>Role of pathogenicity island-associated integrases in the genome plasticity of uropathogenic Escherichia coli strain 536.</title>
        <authorList>
            <person name="Hochhut B."/>
            <person name="Wilde C."/>
            <person name="Balling G."/>
            <person name="Middendorf B."/>
            <person name="Dobrindt U."/>
            <person name="Brzuszkiewicz E."/>
            <person name="Gottschalk G."/>
            <person name="Carniel E."/>
            <person name="Hacker J."/>
        </authorList>
    </citation>
    <scope>NUCLEOTIDE SEQUENCE [LARGE SCALE GENOMIC DNA]</scope>
    <source>
        <strain>536 / UPEC</strain>
    </source>
</reference>
<comment type="function">
    <text evidence="1">Part of the ABC transporter complex UgpBAEC involved in sn-glycerol-3-phosphate (G3P) import. Binds G3P.</text>
</comment>
<comment type="subunit">
    <text evidence="1">The complex is composed of two ATP-binding proteins (UgpC), two transmembrane proteins (UgpA and UgpE) and a solute-binding protein (UgpB).</text>
</comment>
<comment type="subcellular location">
    <subcellularLocation>
        <location evidence="1">Periplasm</location>
    </subcellularLocation>
</comment>
<comment type="similarity">
    <text evidence="3">Belongs to the bacterial solute-binding protein 1 family.</text>
</comment>
<keyword id="KW-0574">Periplasm</keyword>
<keyword id="KW-0732">Signal</keyword>
<keyword id="KW-0813">Transport</keyword>
<accession>Q0TC07</accession>
<dbReference type="EMBL" id="CP000247">
    <property type="protein sequence ID" value="ABG71522.1"/>
    <property type="molecule type" value="Genomic_DNA"/>
</dbReference>
<dbReference type="RefSeq" id="WP_000803580.1">
    <property type="nucleotide sequence ID" value="NC_008253.1"/>
</dbReference>
<dbReference type="SMR" id="Q0TC07"/>
<dbReference type="KEGG" id="ecp:ECP_3546"/>
<dbReference type="HOGENOM" id="CLU_031285_3_0_6"/>
<dbReference type="Proteomes" id="UP000009182">
    <property type="component" value="Chromosome"/>
</dbReference>
<dbReference type="GO" id="GO:0030288">
    <property type="term" value="C:outer membrane-bounded periplasmic space"/>
    <property type="evidence" value="ECO:0007669"/>
    <property type="project" value="UniProtKB-ARBA"/>
</dbReference>
<dbReference type="GO" id="GO:0055085">
    <property type="term" value="P:transmembrane transport"/>
    <property type="evidence" value="ECO:0007669"/>
    <property type="project" value="InterPro"/>
</dbReference>
<dbReference type="CDD" id="cd14748">
    <property type="entry name" value="PBP2_UgpB"/>
    <property type="match status" value="1"/>
</dbReference>
<dbReference type="Gene3D" id="3.40.190.10">
    <property type="entry name" value="Periplasmic binding protein-like II"/>
    <property type="match status" value="2"/>
</dbReference>
<dbReference type="InterPro" id="IPR050490">
    <property type="entry name" value="Bact_solute-bd_prot1"/>
</dbReference>
<dbReference type="InterPro" id="IPR006059">
    <property type="entry name" value="SBP"/>
</dbReference>
<dbReference type="InterPro" id="IPR006061">
    <property type="entry name" value="SBP_1_CS"/>
</dbReference>
<dbReference type="NCBIfam" id="NF008211">
    <property type="entry name" value="PRK10974.1"/>
    <property type="match status" value="1"/>
</dbReference>
<dbReference type="PANTHER" id="PTHR43649">
    <property type="entry name" value="ARABINOSE-BINDING PROTEIN-RELATED"/>
    <property type="match status" value="1"/>
</dbReference>
<dbReference type="PANTHER" id="PTHR43649:SF31">
    <property type="entry name" value="SN-GLYCEROL-3-PHOSPHATE-BINDING PERIPLASMIC PROTEIN UGPB"/>
    <property type="match status" value="1"/>
</dbReference>
<dbReference type="Pfam" id="PF13416">
    <property type="entry name" value="SBP_bac_8"/>
    <property type="match status" value="1"/>
</dbReference>
<dbReference type="SUPFAM" id="SSF53850">
    <property type="entry name" value="Periplasmic binding protein-like II"/>
    <property type="match status" value="1"/>
</dbReference>
<dbReference type="PROSITE" id="PS01037">
    <property type="entry name" value="SBP_BACTERIAL_1"/>
    <property type="match status" value="1"/>
</dbReference>
<protein>
    <recommendedName>
        <fullName evidence="1">sn-glycerol-3-phosphate-binding periplasmic protein UgpB</fullName>
    </recommendedName>
</protein>
<feature type="signal peptide" evidence="2">
    <location>
        <begin position="1"/>
        <end position="23"/>
    </location>
</feature>
<feature type="chain" id="PRO_0000292809" description="sn-glycerol-3-phosphate-binding periplasmic protein UgpB">
    <location>
        <begin position="24"/>
        <end position="438"/>
    </location>
</feature>
<feature type="binding site" evidence="1">
    <location>
        <position position="65"/>
    </location>
    <ligand>
        <name>sn-glycerol 3-phosphate</name>
        <dbReference type="ChEBI" id="CHEBI:57597"/>
    </ligand>
</feature>
<feature type="binding site" evidence="1">
    <location>
        <position position="89"/>
    </location>
    <ligand>
        <name>sn-glycerol 3-phosphate</name>
        <dbReference type="ChEBI" id="CHEBI:57597"/>
    </ligand>
</feature>
<feature type="binding site" evidence="1">
    <location>
        <position position="144"/>
    </location>
    <ligand>
        <name>sn-glycerol 3-phosphate</name>
        <dbReference type="ChEBI" id="CHEBI:57597"/>
    </ligand>
</feature>
<feature type="binding site" evidence="1">
    <location>
        <position position="270"/>
    </location>
    <ligand>
        <name>sn-glycerol 3-phosphate</name>
        <dbReference type="ChEBI" id="CHEBI:57597"/>
    </ligand>
</feature>
<feature type="binding site" evidence="1">
    <location>
        <position position="307"/>
    </location>
    <ligand>
        <name>sn-glycerol 3-phosphate</name>
        <dbReference type="ChEBI" id="CHEBI:57597"/>
    </ligand>
</feature>
<feature type="binding site" evidence="1">
    <location>
        <position position="346"/>
    </location>
    <ligand>
        <name>sn-glycerol 3-phosphate</name>
        <dbReference type="ChEBI" id="CHEBI:57597"/>
    </ligand>
</feature>
<feature type="binding site" evidence="1">
    <location>
        <position position="397"/>
    </location>
    <ligand>
        <name>sn-glycerol 3-phosphate</name>
        <dbReference type="ChEBI" id="CHEBI:57597"/>
    </ligand>
</feature>
<gene>
    <name type="primary">ugpB</name>
    <name type="ordered locus">ECP_3546</name>
</gene>
<name>UGPB_ECOL5</name>
<proteinExistence type="inferred from homology"/>